<feature type="signal peptide" evidence="4">
    <location>
        <begin position="1"/>
        <end position="27"/>
    </location>
</feature>
<feature type="chain" id="PRO_0000024918" description="Alginate lyase">
    <location>
        <begin position="28"/>
        <end position="367"/>
    </location>
</feature>
<feature type="binding site" evidence="10 11">
    <location>
        <begin position="65"/>
        <end position="66"/>
    </location>
    <ligand>
        <name>substrate</name>
    </ligand>
</feature>
<feature type="binding site" evidence="10 11">
    <location>
        <begin position="138"/>
        <end position="139"/>
    </location>
    <ligand>
        <name>substrate</name>
    </ligand>
</feature>
<feature type="binding site" evidence="10 11">
    <location>
        <position position="256"/>
    </location>
    <ligand>
        <name>substrate</name>
    </ligand>
</feature>
<feature type="sequence conflict" description="In Ref. 1; AAA71990." evidence="8" ref="1">
    <original>A</original>
    <variation>P</variation>
    <location>
        <position position="269"/>
    </location>
</feature>
<feature type="sequence conflict" description="In Ref. 1; AAA71990." evidence="8" ref="1">
    <original>KMLEA</original>
    <variation>NACSRP</variation>
    <location>
        <begin position="337"/>
        <end position="341"/>
    </location>
</feature>
<feature type="helix" evidence="12">
    <location>
        <begin position="34"/>
        <end position="37"/>
    </location>
</feature>
<feature type="turn" evidence="12">
    <location>
        <begin position="66"/>
        <end position="69"/>
    </location>
</feature>
<feature type="helix" evidence="12">
    <location>
        <begin position="79"/>
        <end position="88"/>
    </location>
</feature>
<feature type="helix" evidence="12">
    <location>
        <begin position="90"/>
        <end position="109"/>
    </location>
</feature>
<feature type="helix" evidence="12">
    <location>
        <begin position="112"/>
        <end position="128"/>
    </location>
</feature>
<feature type="turn" evidence="12">
    <location>
        <begin position="129"/>
        <end position="131"/>
    </location>
</feature>
<feature type="helix" evidence="12">
    <location>
        <begin position="138"/>
        <end position="160"/>
    </location>
</feature>
<feature type="helix" evidence="12">
    <location>
        <begin position="165"/>
        <end position="168"/>
    </location>
</feature>
<feature type="helix" evidence="12">
    <location>
        <begin position="170"/>
        <end position="191"/>
    </location>
</feature>
<feature type="helix" evidence="12">
    <location>
        <begin position="196"/>
        <end position="198"/>
    </location>
</feature>
<feature type="helix" evidence="12">
    <location>
        <begin position="201"/>
        <end position="217"/>
    </location>
</feature>
<feature type="helix" evidence="12">
    <location>
        <begin position="220"/>
        <end position="236"/>
    </location>
</feature>
<feature type="helix" evidence="12">
    <location>
        <begin position="244"/>
        <end position="247"/>
    </location>
</feature>
<feature type="helix" evidence="12">
    <location>
        <begin position="248"/>
        <end position="252"/>
    </location>
</feature>
<feature type="helix" evidence="12">
    <location>
        <begin position="253"/>
        <end position="273"/>
    </location>
</feature>
<feature type="helix" evidence="12">
    <location>
        <begin position="281"/>
        <end position="298"/>
    </location>
</feature>
<feature type="helix" evidence="12">
    <location>
        <begin position="301"/>
        <end position="307"/>
    </location>
</feature>
<feature type="helix" evidence="12">
    <location>
        <begin position="314"/>
        <end position="317"/>
    </location>
</feature>
<feature type="helix" evidence="12">
    <location>
        <begin position="319"/>
        <end position="324"/>
    </location>
</feature>
<feature type="helix" evidence="12">
    <location>
        <begin position="325"/>
        <end position="331"/>
    </location>
</feature>
<feature type="helix" evidence="12">
    <location>
        <begin position="336"/>
        <end position="345"/>
    </location>
</feature>
<feature type="helix" evidence="12">
    <location>
        <begin position="351"/>
        <end position="353"/>
    </location>
</feature>
<feature type="helix" evidence="12">
    <location>
        <begin position="357"/>
        <end position="360"/>
    </location>
</feature>
<organism>
    <name type="scientific">Pseudomonas aeruginosa (strain ATCC 15692 / DSM 22644 / CIP 104116 / JCM 14847 / LMG 12228 / 1C / PRS 101 / PAO1)</name>
    <dbReference type="NCBI Taxonomy" id="208964"/>
    <lineage>
        <taxon>Bacteria</taxon>
        <taxon>Pseudomonadati</taxon>
        <taxon>Pseudomonadota</taxon>
        <taxon>Gammaproteobacteria</taxon>
        <taxon>Pseudomonadales</taxon>
        <taxon>Pseudomonadaceae</taxon>
        <taxon>Pseudomonas</taxon>
    </lineage>
</organism>
<proteinExistence type="evidence at protein level"/>
<protein>
    <recommendedName>
        <fullName evidence="1 6 7">Alginate lyase</fullName>
        <ecNumber evidence="1 3">4.2.2.3</ecNumber>
    </recommendedName>
    <alternativeName>
        <fullName evidence="1">Poly(beta-D-mannuronate) lyase</fullName>
    </alternativeName>
</protein>
<comment type="function">
    <text evidence="2 3 4 5">Catalyzes the depolymerization of alginate by cleaving the beta-1,4 glycosidic bond between two adjacent sugar residues via a beta-elimination mechanism (PubMed:23215237, PubMed:8335634, PubMed:8370530). May serve to degrade mislocalized alginate that is trapped in the periplasmic space. Acts preferentially on non-acetylated alginate or its precursor mannuronan. Is able to catalyze cleavage adjacent to either mannuronate or guluronate residues in alginate. Exhaustive digestion of alginate by AlgL generates dimeric and trimeric products (PubMed:23215237). In addition to its enzymatic function, AlgL appears to be required for alginate export, maybe as part of a multi-protein alginate-secretion complex (PubMed:16177314).</text>
</comment>
<comment type="catalytic activity">
    <reaction evidence="1 3">
        <text>Eliminative cleavage of alginate to give oligosaccharides with 4-deoxy-alpha-L-erythro-hex-4-enuronosyl groups at their non-reducing ends and beta-D-mannuronate at their reducing end.</text>
        <dbReference type="EC" id="4.2.2.3"/>
    </reaction>
</comment>
<comment type="biophysicochemical properties">
    <kinetics>
        <KM evidence="3">13 uM for mannuronan (dp value of 133)</KM>
        <KM evidence="3">5 uM for acetylated mannuronan (dp value of 133)</KM>
        <KM evidence="3">13 uM for alginate (dp value of 263)</KM>
        <KM evidence="3">2.6 uM for acetylated alginate (dp value of 263)</KM>
        <text evidence="3">kcat is 32 sec(-1) for the depolymerization of mannuronan (dp value of 133). kcat is 1.5 sec(-1) for the depolymerization of acetylated mannuronan (dp value of 133). kcat is 32 sec(-1) for the depolymerization of alginate (dp value of 263). kcat is 1.2 sec(-1) for the depolymerization of acetylated alginate (dp value of 263). The catalytic efficiency of the depolymerization reaction increases linearly with the number of residues in the substrate.</text>
    </kinetics>
</comment>
<comment type="subcellular location">
    <subcellularLocation>
        <location evidence="1 5 9">Periplasm</location>
    </subcellularLocation>
</comment>
<comment type="induction">
    <text evidence="4">Its expression is under the control of AlgB, which also regulates the alginate biosynthetic gene cluster.</text>
</comment>
<comment type="disruption phenotype">
    <text evidence="2">Deletion of algL is lethal, and microscopic examination of the cells reveals that alginate or a precursor accumulates in the periplasmic space until the cells burst.</text>
</comment>
<comment type="similarity">
    <text evidence="1">Belongs to the polysaccharide lyase 5 family.</text>
</comment>
<keyword id="KW-0002">3D-structure</keyword>
<keyword id="KW-0903">Direct protein sequencing</keyword>
<keyword id="KW-0456">Lyase</keyword>
<keyword id="KW-0574">Periplasm</keyword>
<keyword id="KW-1185">Reference proteome</keyword>
<keyword id="KW-0732">Signal</keyword>
<reference key="1">
    <citation type="journal article" date="1993" name="Gene">
        <title>Sequence of the algL gene of Pseudomonas aeruginosa and purification of its alginate lyase product.</title>
        <authorList>
            <person name="Boyd A."/>
            <person name="Ghosh M."/>
            <person name="May T.B."/>
            <person name="Shinabarger D."/>
            <person name="Keogh R."/>
            <person name="Chakrabarty A.M."/>
        </authorList>
    </citation>
    <scope>NUCLEOTIDE SEQUENCE [GENOMIC DNA]</scope>
    <scope>FUNCTION</scope>
    <scope>SUBCELLULAR LOCATION</scope>
    <source>
        <strain>8830</strain>
    </source>
</reference>
<reference key="2">
    <citation type="journal article" date="1993" name="J. Bacteriol.">
        <title>Characterization of the Pseudomonas aeruginosa alginate lyase gene (algL): cloning, sequencing, and expression in Escherichia coli.</title>
        <authorList>
            <person name="Schiller N.L."/>
            <person name="Monday S.R."/>
            <person name="Boyd C.M."/>
            <person name="Keen N.T."/>
            <person name="Ohman D.E."/>
        </authorList>
    </citation>
    <scope>NUCLEOTIDE SEQUENCE [GENOMIC DNA]</scope>
    <scope>PROTEIN SEQUENCE OF 28-43</scope>
    <scope>FUNCTION</scope>
    <scope>INDUCTION</scope>
    <scope>SUBCELLULAR LOCATION</scope>
    <source>
        <strain>FRD1</strain>
    </source>
</reference>
<reference key="3">
    <citation type="journal article" date="2000" name="Nature">
        <title>Complete genome sequence of Pseudomonas aeruginosa PAO1, an opportunistic pathogen.</title>
        <authorList>
            <person name="Stover C.K."/>
            <person name="Pham X.-Q.T."/>
            <person name="Erwin A.L."/>
            <person name="Mizoguchi S.D."/>
            <person name="Warrener P."/>
            <person name="Hickey M.J."/>
            <person name="Brinkman F.S.L."/>
            <person name="Hufnagle W.O."/>
            <person name="Kowalik D.J."/>
            <person name="Lagrou M."/>
            <person name="Garber R.L."/>
            <person name="Goltry L."/>
            <person name="Tolentino E."/>
            <person name="Westbrock-Wadman S."/>
            <person name="Yuan Y."/>
            <person name="Brody L.L."/>
            <person name="Coulter S.N."/>
            <person name="Folger K.R."/>
            <person name="Kas A."/>
            <person name="Larbig K."/>
            <person name="Lim R.M."/>
            <person name="Smith K.A."/>
            <person name="Spencer D.H."/>
            <person name="Wong G.K.-S."/>
            <person name="Wu Z."/>
            <person name="Paulsen I.T."/>
            <person name="Reizer J."/>
            <person name="Saier M.H. Jr."/>
            <person name="Hancock R.E.W."/>
            <person name="Lory S."/>
            <person name="Olson M.V."/>
        </authorList>
    </citation>
    <scope>NUCLEOTIDE SEQUENCE [LARGE SCALE GENOMIC DNA]</scope>
    <source>
        <strain>ATCC 15692 / DSM 22644 / CIP 104116 / JCM 14847 / LMG 12228 / 1C / PRS 101 / PAO1</strain>
    </source>
</reference>
<reference key="4">
    <citation type="journal article" date="2005" name="Infect. Immun.">
        <title>Role of an alginate lyase for alginate transport in mucoid Pseudomonas aeruginosa.</title>
        <authorList>
            <person name="Jain S."/>
            <person name="Ohman D.E."/>
        </authorList>
    </citation>
    <scope>FUNCTION</scope>
    <scope>DISRUPTION PHENOTYPE</scope>
    <source>
        <strain>FRD1</strain>
    </source>
</reference>
<reference key="5">
    <citation type="journal article" date="2012" name="Biochemistry">
        <title>Functional characterization of AlgL, an alginate lyase from Pseudomonas aeruginosa.</title>
        <authorList>
            <person name="Farrell E.K."/>
            <person name="Tipton P.A."/>
        </authorList>
    </citation>
    <scope>FUNCTION</scope>
    <scope>CATALYTIC ACTIVITY</scope>
    <scope>SUBSTRATE SPECIFICITY</scope>
    <scope>BIOPHYSICOCHEMICAL PROPERTIES</scope>
</reference>
<reference key="6">
    <citation type="submission" date="2014-02" db="PDB data bank">
        <title>Crystal structure of the periplasmic alginate lyase AlgL and the AlgL H202A mutant.</title>
        <authorList>
            <person name="Howell P.L."/>
            <person name="Wolfram F."/>
            <person name="Robinson H."/>
            <person name="Arora K."/>
        </authorList>
    </citation>
    <scope>X-RAY CRYSTALLOGRAPHY (1.64 ANGSTROMS) OF 28-362 OF WILD-TYPE AND MUTANT ALA-202 IN COMPLEX WITH BETA-D-MANNURONATE</scope>
    <source>
        <strain>ATCC 15692 / DSM 22644 / CIP 104116 / JCM 14847 / LMG 12228 / 1C / PRS 101 / PAO1</strain>
    </source>
</reference>
<evidence type="ECO:0000255" key="1">
    <source>
        <dbReference type="HAMAP-Rule" id="MF_00557"/>
    </source>
</evidence>
<evidence type="ECO:0000269" key="2">
    <source>
    </source>
</evidence>
<evidence type="ECO:0000269" key="3">
    <source>
    </source>
</evidence>
<evidence type="ECO:0000269" key="4">
    <source>
    </source>
</evidence>
<evidence type="ECO:0000269" key="5">
    <source>
    </source>
</evidence>
<evidence type="ECO:0000303" key="6">
    <source>
    </source>
</evidence>
<evidence type="ECO:0000303" key="7">
    <source>
    </source>
</evidence>
<evidence type="ECO:0000305" key="8"/>
<evidence type="ECO:0000305" key="9">
    <source>
    </source>
</evidence>
<evidence type="ECO:0000305" key="10">
    <source ref="6"/>
</evidence>
<evidence type="ECO:0007744" key="11">
    <source>
        <dbReference type="PDB" id="4OZV"/>
    </source>
</evidence>
<evidence type="ECO:0007829" key="12">
    <source>
        <dbReference type="PDB" id="4OZW"/>
    </source>
</evidence>
<accession>Q06749</accession>
<accession>Q57292</accession>
<sequence>MKTSHLIRIALPGALAAALLASQVSQAADLVPPPGYYAAVGERKGSAGSCPAVPPPYTGSLVFTSKYEGSDSARATLNVKAEKTFRSQIKDITDMERGATKLVTQYMRSGRDGDLACALNWMSAWARAGALQSDDFNHTGKSMRKWALGSLSGAYMRLKFSSSRPLAAHAEQSREIEDWFARLGTQVVRDWSGLPLKKINNHSYWAAWSVMSTAVVTNRRDLFDWAVSEFKVAANQVDEQGFLPNELKRRQRALAYHNYALPPLAMIAAFAQVNGVDLRQENHGALQRLAERVMKGVDDEETFEEKTGEDQDMTDLKVDNKYAWLEPYCALYRCEPKMLEAKKDREPFNSFRLGGEVTRVFSREGGS</sequence>
<name>ALGL_PSEAE</name>
<gene>
    <name evidence="1 6 7" type="primary">algL</name>
    <name type="ordered locus">PA3547</name>
</gene>
<dbReference type="EC" id="4.2.2.3" evidence="1 3"/>
<dbReference type="EMBL" id="L14597">
    <property type="protein sequence ID" value="AAA71990.1"/>
    <property type="molecule type" value="Unassigned_DNA"/>
</dbReference>
<dbReference type="EMBL" id="U27829">
    <property type="protein sequence ID" value="AAA91127.1"/>
    <property type="molecule type" value="Genomic_DNA"/>
</dbReference>
<dbReference type="EMBL" id="AE004091">
    <property type="protein sequence ID" value="AAG06935.1"/>
    <property type="molecule type" value="Genomic_DNA"/>
</dbReference>
<dbReference type="PIR" id="H83202">
    <property type="entry name" value="H83202"/>
</dbReference>
<dbReference type="PIR" id="JN0777">
    <property type="entry name" value="JN0777"/>
</dbReference>
<dbReference type="RefSeq" id="NP_252237.1">
    <property type="nucleotide sequence ID" value="NC_002516.2"/>
</dbReference>
<dbReference type="RefSeq" id="WP_003092108.1">
    <property type="nucleotide sequence ID" value="NZ_QZGE01000001.1"/>
</dbReference>
<dbReference type="PDB" id="4OZV">
    <property type="method" value="X-ray"/>
    <property type="resolution" value="1.64 A"/>
    <property type="chains" value="A=28-362"/>
</dbReference>
<dbReference type="PDB" id="4OZW">
    <property type="method" value="X-ray"/>
    <property type="resolution" value="1.64 A"/>
    <property type="chains" value="A=28-362"/>
</dbReference>
<dbReference type="PDB" id="7SA8">
    <property type="method" value="X-ray"/>
    <property type="resolution" value="2.50 A"/>
    <property type="chains" value="A=28-362"/>
</dbReference>
<dbReference type="PDBsum" id="4OZV"/>
<dbReference type="PDBsum" id="4OZW"/>
<dbReference type="PDBsum" id="7SA8"/>
<dbReference type="SMR" id="Q06749"/>
<dbReference type="STRING" id="208964.PA3547"/>
<dbReference type="CAZy" id="PL5">
    <property type="family name" value="Polysaccharide Lyase Family 5"/>
</dbReference>
<dbReference type="PaxDb" id="208964-PA3547"/>
<dbReference type="GeneID" id="878552"/>
<dbReference type="KEGG" id="pae:PA3547"/>
<dbReference type="PATRIC" id="fig|208964.12.peg.3711"/>
<dbReference type="PseudoCAP" id="PA3547"/>
<dbReference type="HOGENOM" id="CLU_064286_0_0_6"/>
<dbReference type="InParanoid" id="Q06749"/>
<dbReference type="OrthoDB" id="6972889at2"/>
<dbReference type="PhylomeDB" id="Q06749"/>
<dbReference type="BioCyc" id="PAER208964:G1FZ6-3615-MONOMER"/>
<dbReference type="BRENDA" id="4.2.2.3">
    <property type="organism ID" value="5087"/>
</dbReference>
<dbReference type="EvolutionaryTrace" id="Q06749"/>
<dbReference type="Proteomes" id="UP000002438">
    <property type="component" value="Chromosome"/>
</dbReference>
<dbReference type="GO" id="GO:0042597">
    <property type="term" value="C:periplasmic space"/>
    <property type="evidence" value="ECO:0007669"/>
    <property type="project" value="UniProtKB-SubCell"/>
</dbReference>
<dbReference type="GO" id="GO:0045135">
    <property type="term" value="F:poly(beta-D-mannuronate) lyase activity"/>
    <property type="evidence" value="ECO:0007669"/>
    <property type="project" value="UniProtKB-UniRule"/>
</dbReference>
<dbReference type="GO" id="GO:0004794">
    <property type="term" value="F:threonine deaminase activity"/>
    <property type="evidence" value="ECO:0000314"/>
    <property type="project" value="PseudoCAP"/>
</dbReference>
<dbReference type="GO" id="GO:0042121">
    <property type="term" value="P:alginic acid biosynthetic process"/>
    <property type="evidence" value="ECO:0000315"/>
    <property type="project" value="PseudoCAP"/>
</dbReference>
<dbReference type="GO" id="GO:0042122">
    <property type="term" value="P:alginic acid catabolic process"/>
    <property type="evidence" value="ECO:0000314"/>
    <property type="project" value="PseudoCAP"/>
</dbReference>
<dbReference type="CDD" id="cd00244">
    <property type="entry name" value="AlgLyase"/>
    <property type="match status" value="1"/>
</dbReference>
<dbReference type="FunFam" id="1.50.10.100:FF:000002">
    <property type="entry name" value="Alginate lyase"/>
    <property type="match status" value="1"/>
</dbReference>
<dbReference type="Gene3D" id="1.50.10.100">
    <property type="entry name" value="Chondroitin AC/alginate lyase"/>
    <property type="match status" value="1"/>
</dbReference>
<dbReference type="HAMAP" id="MF_00557">
    <property type="entry name" value="Alginate_lyase"/>
    <property type="match status" value="1"/>
</dbReference>
<dbReference type="InterPro" id="IPR022859">
    <property type="entry name" value="Alginate_lyase"/>
</dbReference>
<dbReference type="InterPro" id="IPR008397">
    <property type="entry name" value="Alginate_lyase_dom"/>
</dbReference>
<dbReference type="InterPro" id="IPR008929">
    <property type="entry name" value="Chondroitin_lyas"/>
</dbReference>
<dbReference type="NCBIfam" id="NF001467">
    <property type="entry name" value="PRK00325.1-2"/>
    <property type="match status" value="1"/>
</dbReference>
<dbReference type="Pfam" id="PF05426">
    <property type="entry name" value="Alginate_lyase"/>
    <property type="match status" value="1"/>
</dbReference>
<dbReference type="SUPFAM" id="SSF48230">
    <property type="entry name" value="Chondroitin AC/alginate lyase"/>
    <property type="match status" value="1"/>
</dbReference>